<protein>
    <recommendedName>
        <fullName evidence="6">Dioxygenase cnsJ</fullName>
        <ecNumber evidence="4">1.14.11.-</ecNumber>
    </recommendedName>
    <alternativeName>
        <fullName evidence="6">Communesin biosynthesis cluster protein J</fullName>
    </alternativeName>
</protein>
<dbReference type="EC" id="1.14.11.-" evidence="4"/>
<dbReference type="EMBL" id="JQFZ01000090">
    <property type="protein sequence ID" value="KGO59703.1"/>
    <property type="molecule type" value="Genomic_DNA"/>
</dbReference>
<dbReference type="RefSeq" id="XP_016600816.1">
    <property type="nucleotide sequence ID" value="XM_016742818.1"/>
</dbReference>
<dbReference type="SMR" id="A0A0A2JYK3"/>
<dbReference type="STRING" id="27334.A0A0A2JYK3"/>
<dbReference type="GeneID" id="27678237"/>
<dbReference type="VEuPathDB" id="FungiDB:PEXP_030550"/>
<dbReference type="HOGENOM" id="CLU_047725_0_1_1"/>
<dbReference type="OrthoDB" id="445007at2759"/>
<dbReference type="PhylomeDB" id="A0A0A2JYK3"/>
<dbReference type="Proteomes" id="UP000030143">
    <property type="component" value="Unassembled WGS sequence"/>
</dbReference>
<dbReference type="GO" id="GO:0051213">
    <property type="term" value="F:dioxygenase activity"/>
    <property type="evidence" value="ECO:0007669"/>
    <property type="project" value="UniProtKB-KW"/>
</dbReference>
<dbReference type="GO" id="GO:0046872">
    <property type="term" value="F:metal ion binding"/>
    <property type="evidence" value="ECO:0007669"/>
    <property type="project" value="UniProtKB-KW"/>
</dbReference>
<dbReference type="GO" id="GO:0009058">
    <property type="term" value="P:biosynthetic process"/>
    <property type="evidence" value="ECO:0007669"/>
    <property type="project" value="UniProtKB-ARBA"/>
</dbReference>
<dbReference type="Gene3D" id="2.60.120.620">
    <property type="entry name" value="q2cbj1_9rhob like domain"/>
    <property type="match status" value="1"/>
</dbReference>
<dbReference type="InterPro" id="IPR008775">
    <property type="entry name" value="Phytyl_CoA_dOase-like"/>
</dbReference>
<dbReference type="PANTHER" id="PTHR20883">
    <property type="entry name" value="PHYTANOYL-COA DIOXYGENASE DOMAIN CONTAINING 1"/>
    <property type="match status" value="1"/>
</dbReference>
<dbReference type="PANTHER" id="PTHR20883:SF45">
    <property type="entry name" value="PHYTANOYL-COA DIOXYGENASE FAMILY PROTEIN"/>
    <property type="match status" value="1"/>
</dbReference>
<dbReference type="Pfam" id="PF05721">
    <property type="entry name" value="PhyH"/>
    <property type="match status" value="1"/>
</dbReference>
<dbReference type="SUPFAM" id="SSF51197">
    <property type="entry name" value="Clavaminate synthase-like"/>
    <property type="match status" value="1"/>
</dbReference>
<sequence>MTVDTAPQSHYQETKVSEIPIVILKSSATDDVAAHEAIEALKVAGVCIVRNLLDRSTVDKVRQELQPYDKQADSFEGFPKNYCQVAGLLSKSPTYAHSIVGNKLFTAVRNYFLTSTYECWAEKGTWMSVKSPPQLDSTLALYVNPGSGDQGLHRDDATQQNWNSGASEYSLGRDSGCAMMVALTECAREDGTTRFIPGSHLWDYQYDHPSNDDPRIRYAEMRPGDAYLMLSSVIHAGSVNYSTDRRRVLAAVFAARSHLRQVENQYLTYDIETVRTFPTWLQRFMGYSLSKLFQGWVDKKDPLLVVDPNAQPEGEDDGGMKPNEGEHVVEAQI</sequence>
<reference key="1">
    <citation type="journal article" date="2015" name="Mol. Plant Microbe Interact.">
        <title>Genome, transcriptome, and functional analyses of Penicillium expansum provide new insights into secondary metabolism and pathogenicity.</title>
        <authorList>
            <person name="Ballester A.R."/>
            <person name="Marcet-Houben M."/>
            <person name="Levin E."/>
            <person name="Sela N."/>
            <person name="Selma-Lazaro C."/>
            <person name="Carmona L."/>
            <person name="Wisniewski M."/>
            <person name="Droby S."/>
            <person name="Gonzalez-Candelas L."/>
            <person name="Gabaldon T."/>
        </authorList>
    </citation>
    <scope>NUCLEOTIDE SEQUENCE [LARGE SCALE GENOMIC DNA]</scope>
    <source>
        <strain>MD-8</strain>
    </source>
</reference>
<reference key="2">
    <citation type="journal article" date="2015" name="Angew. Chem. Int. Ed.">
        <title>Elucidation of the concise biosynthetic pathway of the communesin indole alkaloids.</title>
        <authorList>
            <person name="Lin H.C."/>
            <person name="Chiou G."/>
            <person name="Chooi Y.H."/>
            <person name="McMahon T.C."/>
            <person name="Xu W."/>
            <person name="Garg N.K."/>
            <person name="Tang Y."/>
        </authorList>
    </citation>
    <scope>IDENTIFICATION</scope>
    <scope>FUNCTION</scope>
    <scope>DISRUPTION PHENOTYPE</scope>
    <scope>CATALYTIC ACTIVITY</scope>
    <scope>PATHWAY</scope>
</reference>
<reference key="3">
    <citation type="journal article" date="2016" name="J. Am. Chem. Soc.">
        <title>P450-mediated coupling of indole fragments to forge communesin and unnatural isomers.</title>
        <authorList>
            <person name="Lin H.C."/>
            <person name="McMahon T.C."/>
            <person name="Patel A."/>
            <person name="Corsello M."/>
            <person name="Simon A."/>
            <person name="Xu W."/>
            <person name="Zhao M."/>
            <person name="Houk K.N."/>
            <person name="Garg N.K."/>
            <person name="Tang Y."/>
        </authorList>
    </citation>
    <scope>FUNCTION</scope>
</reference>
<evidence type="ECO:0000250" key="1">
    <source>
        <dbReference type="UniProtKB" id="O14832"/>
    </source>
</evidence>
<evidence type="ECO:0000250" key="2">
    <source>
        <dbReference type="UniProtKB" id="Q4WAW9"/>
    </source>
</evidence>
<evidence type="ECO:0000256" key="3">
    <source>
        <dbReference type="SAM" id="MobiDB-lite"/>
    </source>
</evidence>
<evidence type="ECO:0000269" key="4">
    <source>
    </source>
</evidence>
<evidence type="ECO:0000269" key="5">
    <source>
    </source>
</evidence>
<evidence type="ECO:0000303" key="6">
    <source>
    </source>
</evidence>
<evidence type="ECO:0000305" key="7"/>
<comment type="function">
    <text evidence="4 5">Dioxygenase; part of the gene cluster that mediates the biosynthesis of communesins, a prominent class of indole alkaloids with great potential as pharmaceuticals (PubMed:25571861). Communesins are biosynthesized by the coupling of tryptamine and aurantioclavine, two building blocks derived from L-tryptophan (PubMed:25571861). The L-tryptophan decarboxylase cnsB converts L-tryptophan to tryptamine, whereas the tryptophan dimethylallyltransferase cnsF converts L-tryptophan to 4-dimethylallyl tryptophan which is further transformed to aurantioclavine by the aurantioclavine synthase cnsA, probably aided by the catalase cnsD (PubMed:25571861). The cytochrome P450 monooxygenase cnsC catalyzes the heterodimeric coupling between the two different indole moieties, tryptamine and aurantioclavine, to construct vicinal quaternary stereocenters and yield the heptacyclic communesin scaffold (PubMed:26963294). The O-methyltransferase cnsE then methylates the communesin scaffold to produce communesin K, the simplest characterized communesin that contains the heptacyclic core (PubMed:25571861). The dioxygenase cnsJ converts communesin K into communesin I (PubMed:25571861). Acylation to introduce the hexadienyl group at position N16 of communesin I by the acyltransferase cnsK leads to the production of communesin B. The hexadienyl group is produced by the highly reducing polyketide synthase cnsI, before being hydrolytically removed from cnsI by the serine hydrolase cnsH, converted into hexadienyl-CoA by the CoA ligase cnsG, and then transferred to communesin I by cnsK (PubMed:25571861). Surprisingly, cnsK may also be a promiscuous acyltransferase that can tolerate a range of acyl groups, including acetyl-, propionyl-, and butyryl-CoA, which lead to communesins A, G and H respectively (PubMed:25571861). The roles of the alpha-ketoglutarate-dependent dioxygenases cnsM and cnsP have still to be determined (PubMed:25571861).</text>
</comment>
<comment type="cofactor">
    <cofactor evidence="2">
        <name>Fe cation</name>
        <dbReference type="ChEBI" id="CHEBI:24875"/>
    </cofactor>
</comment>
<comment type="pathway">
    <text evidence="4">Alkaloid biosynthesis.</text>
</comment>
<comment type="subunit">
    <text evidence="2">Homodimer.</text>
</comment>
<comment type="disruption phenotype">
    <text evidence="4">Abolishes the biosynthesis of communesin B and leads to the accumulation of communesins F, J and K.</text>
</comment>
<comment type="similarity">
    <text evidence="7">Belongs to the PhyH family.</text>
</comment>
<name>CNSJ_PENEN</name>
<accession>A0A0A2JYK3</accession>
<proteinExistence type="evidence at protein level"/>
<gene>
    <name evidence="6" type="primary">cnsJ</name>
    <name type="ORF">PEX2_055440</name>
</gene>
<feature type="chain" id="PRO_0000446465" description="Dioxygenase cnsJ">
    <location>
        <begin position="1"/>
        <end position="333"/>
    </location>
</feature>
<feature type="region of interest" description="Disordered" evidence="3">
    <location>
        <begin position="309"/>
        <end position="333"/>
    </location>
</feature>
<feature type="compositionally biased region" description="Basic and acidic residues" evidence="3">
    <location>
        <begin position="323"/>
        <end position="333"/>
    </location>
</feature>
<feature type="binding site" evidence="1">
    <location>
        <position position="153"/>
    </location>
    <ligand>
        <name>Fe cation</name>
        <dbReference type="ChEBI" id="CHEBI:24875"/>
    </ligand>
</feature>
<feature type="binding site" evidence="1">
    <location>
        <position position="155"/>
    </location>
    <ligand>
        <name>Fe cation</name>
        <dbReference type="ChEBI" id="CHEBI:24875"/>
    </ligand>
</feature>
<feature type="binding site" evidence="1">
    <location>
        <position position="235"/>
    </location>
    <ligand>
        <name>Fe cation</name>
        <dbReference type="ChEBI" id="CHEBI:24875"/>
    </ligand>
</feature>
<organism>
    <name type="scientific">Penicillium expansum</name>
    <name type="common">Blue mold rot fungus</name>
    <dbReference type="NCBI Taxonomy" id="27334"/>
    <lineage>
        <taxon>Eukaryota</taxon>
        <taxon>Fungi</taxon>
        <taxon>Dikarya</taxon>
        <taxon>Ascomycota</taxon>
        <taxon>Pezizomycotina</taxon>
        <taxon>Eurotiomycetes</taxon>
        <taxon>Eurotiomycetidae</taxon>
        <taxon>Eurotiales</taxon>
        <taxon>Aspergillaceae</taxon>
        <taxon>Penicillium</taxon>
    </lineage>
</organism>
<keyword id="KW-0223">Dioxygenase</keyword>
<keyword id="KW-0408">Iron</keyword>
<keyword id="KW-0479">Metal-binding</keyword>
<keyword id="KW-0560">Oxidoreductase</keyword>
<keyword id="KW-1185">Reference proteome</keyword>